<accession>Q03444</accession>
<name>DNBI_EHV1</name>
<reference key="1">
    <citation type="journal article" date="1993" name="Virus Genes">
        <title>Herpesvirus ICP18.5 and DNA-binding protein genes are conserved in equine herpesvirus-1.</title>
        <authorList>
            <person name="Bell C.W."/>
            <person name="Whalley J.M."/>
        </authorList>
    </citation>
    <scope>NUCLEOTIDE SEQUENCE [GENOMIC DNA]</scope>
</reference>
<proteinExistence type="inferred from homology"/>
<keyword id="KW-0235">DNA replication</keyword>
<keyword id="KW-0238">DNA-binding</keyword>
<keyword id="KW-1048">Host nucleus</keyword>
<organism>
    <name type="scientific">Equine herpesvirus 1 (strain HVS25A)</name>
    <name type="common">EHV-1</name>
    <name type="synonym">Equine abortion virus</name>
    <dbReference type="NCBI Taxonomy" id="10327"/>
    <lineage>
        <taxon>Viruses</taxon>
        <taxon>Duplodnaviria</taxon>
        <taxon>Heunggongvirae</taxon>
        <taxon>Peploviricota</taxon>
        <taxon>Herviviricetes</taxon>
        <taxon>Herpesvirales</taxon>
        <taxon>Orthoherpesviridae</taxon>
        <taxon>Alphaherpesvirinae</taxon>
        <taxon>Varicellovirus</taxon>
        <taxon>Varicellovirus equidalpha1</taxon>
        <taxon>Equid alphaherpesvirus 1</taxon>
    </lineage>
</organism>
<comment type="function">
    <text>Single-stranded DNA-binding protein required for DNA replication.</text>
</comment>
<comment type="subcellular location">
    <subcellularLocation>
        <location evidence="1">Host nucleus</location>
    </subcellularLocation>
</comment>
<comment type="similarity">
    <text evidence="1">Belongs to the herpesviridae DNA-binding protein family.</text>
</comment>
<dbReference type="EMBL" id="D13930">
    <property type="protein sequence ID" value="BAA03033.1"/>
    <property type="molecule type" value="Genomic_DNA"/>
</dbReference>
<dbReference type="PIR" id="JQ0846">
    <property type="entry name" value="JQ0846"/>
</dbReference>
<dbReference type="SMR" id="Q03444"/>
<dbReference type="GO" id="GO:0042025">
    <property type="term" value="C:host cell nucleus"/>
    <property type="evidence" value="ECO:0007669"/>
    <property type="project" value="UniProtKB-SubCell"/>
</dbReference>
<dbReference type="GO" id="GO:0003697">
    <property type="term" value="F:single-stranded DNA binding"/>
    <property type="evidence" value="ECO:0007669"/>
    <property type="project" value="InterPro"/>
</dbReference>
<dbReference type="GO" id="GO:0006260">
    <property type="term" value="P:DNA replication"/>
    <property type="evidence" value="ECO:0007669"/>
    <property type="project" value="UniProtKB-KW"/>
</dbReference>
<dbReference type="Gene3D" id="1.10.150.560">
    <property type="match status" value="1"/>
</dbReference>
<dbReference type="Gene3D" id="1.20.190.40">
    <property type="entry name" value="Viral ssDNA binding protein, head domain"/>
    <property type="match status" value="1"/>
</dbReference>
<dbReference type="InterPro" id="IPR035989">
    <property type="entry name" value="DBP_sf"/>
</dbReference>
<dbReference type="InterPro" id="IPR043031">
    <property type="entry name" value="Viral_ssDBP_head"/>
</dbReference>
<dbReference type="InterPro" id="IPR000635">
    <property type="entry name" value="Viral_ssDNA-bd"/>
</dbReference>
<dbReference type="Pfam" id="PF00747">
    <property type="entry name" value="Viral_DNA_bp"/>
    <property type="match status" value="1"/>
</dbReference>
<dbReference type="SUPFAM" id="SSF118208">
    <property type="entry name" value="Viral ssDNA binding protein"/>
    <property type="match status" value="1"/>
</dbReference>
<protein>
    <recommendedName>
        <fullName>Major DNA-binding protein</fullName>
    </recommendedName>
</protein>
<sequence>PGHPPGIDTPNPQWFWTLLQRNQMPARLLSKEDIETITAIKRFSDEYSAINFINLTPNNIGELAQFYFANLVLKYCDHSQYFINGLTAIVVGSRRPRDPAAVLAWIDRTINGAADVEPAAQEVLQRLGSNPAAWTGTFTSTNMVRYVMDQRPMVVIGLSISKYNGSAGNNRVFQAGNWNGLNGGKNVCPLMAFDRTRRFVLACPRVGFTCEAGGFGTGVRENTLSEQVRGIVSEGGPMVQTAVFAAVLHALGARTQHLAVDDWIGLVDDEFLAASLDALNATVVDQFGEWSVEAAQELVKNMEAQTTAGAVAAGEGAFDFGACVGDTPQQSTSAFNGGLAMAAAPAGQKRSLPDDILFDMGAPPEKKSGLTFDML</sequence>
<organismHost>
    <name type="scientific">Equus caballus</name>
    <name type="common">Horse</name>
    <dbReference type="NCBI Taxonomy" id="9796"/>
</organismHost>
<feature type="chain" id="PRO_0000115749" description="Major DNA-binding protein">
    <location>
        <begin position="1" status="less than"/>
        <end position="375"/>
    </location>
</feature>
<feature type="non-terminal residue">
    <location>
        <position position="1"/>
    </location>
</feature>
<evidence type="ECO:0000305" key="1"/>